<dbReference type="EMBL" id="CP000970">
    <property type="protein sequence ID" value="ACB19916.1"/>
    <property type="molecule type" value="Genomic_DNA"/>
</dbReference>
<dbReference type="RefSeq" id="WP_001295343.1">
    <property type="nucleotide sequence ID" value="NC_010498.1"/>
</dbReference>
<dbReference type="BMRB" id="B1LJX2"/>
<dbReference type="SMR" id="B1LJX2"/>
<dbReference type="GeneID" id="93776529"/>
<dbReference type="KEGG" id="ecm:EcSMS35_2229"/>
<dbReference type="HOGENOM" id="CLU_087560_1_1_6"/>
<dbReference type="Proteomes" id="UP000007011">
    <property type="component" value="Chromosome"/>
</dbReference>
<dbReference type="GO" id="GO:0030288">
    <property type="term" value="C:outer membrane-bounded periplasmic space"/>
    <property type="evidence" value="ECO:0007669"/>
    <property type="project" value="TreeGrafter"/>
</dbReference>
<dbReference type="GO" id="GO:0044874">
    <property type="term" value="P:lipoprotein localization to outer membrane"/>
    <property type="evidence" value="ECO:0007669"/>
    <property type="project" value="UniProtKB-UniRule"/>
</dbReference>
<dbReference type="GO" id="GO:0042953">
    <property type="term" value="P:lipoprotein transport"/>
    <property type="evidence" value="ECO:0007669"/>
    <property type="project" value="InterPro"/>
</dbReference>
<dbReference type="CDD" id="cd16325">
    <property type="entry name" value="LolA"/>
    <property type="match status" value="1"/>
</dbReference>
<dbReference type="FunFam" id="2.50.20.10:FF:000001">
    <property type="entry name" value="Outer-membrane lipoprotein carrier protein"/>
    <property type="match status" value="1"/>
</dbReference>
<dbReference type="Gene3D" id="2.50.20.10">
    <property type="entry name" value="Lipoprotein localisation LolA/LolB/LppX"/>
    <property type="match status" value="1"/>
</dbReference>
<dbReference type="HAMAP" id="MF_00240">
    <property type="entry name" value="LolA"/>
    <property type="match status" value="1"/>
</dbReference>
<dbReference type="InterPro" id="IPR029046">
    <property type="entry name" value="LolA/LolB/LppX"/>
</dbReference>
<dbReference type="InterPro" id="IPR004564">
    <property type="entry name" value="OM_lipoprot_carrier_LolA-like"/>
</dbReference>
<dbReference type="InterPro" id="IPR018323">
    <property type="entry name" value="OM_lipoprot_carrier_LolA_Pbac"/>
</dbReference>
<dbReference type="NCBIfam" id="TIGR00547">
    <property type="entry name" value="lolA"/>
    <property type="match status" value="1"/>
</dbReference>
<dbReference type="PANTHER" id="PTHR35869">
    <property type="entry name" value="OUTER-MEMBRANE LIPOPROTEIN CARRIER PROTEIN"/>
    <property type="match status" value="1"/>
</dbReference>
<dbReference type="PANTHER" id="PTHR35869:SF1">
    <property type="entry name" value="OUTER-MEMBRANE LIPOPROTEIN CARRIER PROTEIN"/>
    <property type="match status" value="1"/>
</dbReference>
<dbReference type="Pfam" id="PF03548">
    <property type="entry name" value="LolA"/>
    <property type="match status" value="1"/>
</dbReference>
<dbReference type="SUPFAM" id="SSF89392">
    <property type="entry name" value="Prokaryotic lipoproteins and lipoprotein localization factors"/>
    <property type="match status" value="1"/>
</dbReference>
<protein>
    <recommendedName>
        <fullName evidence="1">Outer-membrane lipoprotein carrier protein</fullName>
    </recommendedName>
</protein>
<gene>
    <name evidence="1" type="primary">lolA</name>
    <name type="ordered locus">EcSMS35_2229</name>
</gene>
<evidence type="ECO:0000255" key="1">
    <source>
        <dbReference type="HAMAP-Rule" id="MF_00240"/>
    </source>
</evidence>
<comment type="function">
    <text evidence="1">Participates in the translocation of lipoproteins from the inner membrane to the outer membrane. Only forms a complex with a lipoprotein if the residue after the N-terminal Cys is not an aspartate (The Asp acts as a targeting signal to indicate that the lipoprotein should stay in the inner membrane).</text>
</comment>
<comment type="subunit">
    <text evidence="1">Monomer.</text>
</comment>
<comment type="subcellular location">
    <subcellularLocation>
        <location evidence="1">Periplasm</location>
    </subcellularLocation>
</comment>
<comment type="similarity">
    <text evidence="1">Belongs to the LolA family.</text>
</comment>
<accession>B1LJX2</accession>
<reference key="1">
    <citation type="journal article" date="2008" name="J. Bacteriol.">
        <title>Insights into the environmental resistance gene pool from the genome sequence of the multidrug-resistant environmental isolate Escherichia coli SMS-3-5.</title>
        <authorList>
            <person name="Fricke W.F."/>
            <person name="Wright M.S."/>
            <person name="Lindell A.H."/>
            <person name="Harkins D.M."/>
            <person name="Baker-Austin C."/>
            <person name="Ravel J."/>
            <person name="Stepanauskas R."/>
        </authorList>
    </citation>
    <scope>NUCLEOTIDE SEQUENCE [LARGE SCALE GENOMIC DNA]</scope>
    <source>
        <strain>SMS-3-5 / SECEC</strain>
    </source>
</reference>
<sequence length="203" mass="22497">MKKIAITCALLSSLVASSVWADAASDLKSRLDKVSSFHASFTQKVTDGSGAAVQEGQGDLWVKRPNLFNWHMTQPDESILVSDGKTLWFYNPFVEQATATWLKDATGNTPFMLIARNQSSDWQQYNIKQNGDDFVLTPKASNGNLKQFTINVGRDGTIHQFSAVEQDDQRSSYQLKSQQNGAVDAAKFTFTPPQGVTVDDQRK</sequence>
<name>LOLA_ECOSM</name>
<keyword id="KW-0143">Chaperone</keyword>
<keyword id="KW-0574">Periplasm</keyword>
<keyword id="KW-0653">Protein transport</keyword>
<keyword id="KW-0732">Signal</keyword>
<keyword id="KW-0813">Transport</keyword>
<organism>
    <name type="scientific">Escherichia coli (strain SMS-3-5 / SECEC)</name>
    <dbReference type="NCBI Taxonomy" id="439855"/>
    <lineage>
        <taxon>Bacteria</taxon>
        <taxon>Pseudomonadati</taxon>
        <taxon>Pseudomonadota</taxon>
        <taxon>Gammaproteobacteria</taxon>
        <taxon>Enterobacterales</taxon>
        <taxon>Enterobacteriaceae</taxon>
        <taxon>Escherichia</taxon>
    </lineage>
</organism>
<feature type="signal peptide" evidence="1">
    <location>
        <begin position="1"/>
        <end position="21"/>
    </location>
</feature>
<feature type="chain" id="PRO_1000119030" description="Outer-membrane lipoprotein carrier protein">
    <location>
        <begin position="22"/>
        <end position="203"/>
    </location>
</feature>
<proteinExistence type="inferred from homology"/>